<accession>Q3K9A2</accession>
<keyword id="KW-0285">Flavoprotein</keyword>
<keyword id="KW-0288">FMN</keyword>
<keyword id="KW-0520">NAD</keyword>
<keyword id="KW-0560">Oxidoreductase</keyword>
<gene>
    <name evidence="3" type="primary">sfnF</name>
    <name evidence="2" type="synonym">msuE</name>
    <name evidence="5" type="ordered locus">Pfl01_3915</name>
</gene>
<protein>
    <recommendedName>
        <fullName evidence="2">NADH-dependent FMN reductase SfnF</fullName>
        <ecNumber evidence="1">1.5.1.42</ecNumber>
    </recommendedName>
    <alternativeName>
        <fullName evidence="4">NADH-flavin reductase</fullName>
    </alternativeName>
</protein>
<organism>
    <name type="scientific">Pseudomonas fluorescens (strain Pf0-1)</name>
    <dbReference type="NCBI Taxonomy" id="205922"/>
    <lineage>
        <taxon>Bacteria</taxon>
        <taxon>Pseudomonadati</taxon>
        <taxon>Pseudomonadota</taxon>
        <taxon>Gammaproteobacteria</taxon>
        <taxon>Pseudomonadales</taxon>
        <taxon>Pseudomonadaceae</taxon>
        <taxon>Pseudomonas</taxon>
    </lineage>
</organism>
<reference key="1">
    <citation type="journal article" date="2009" name="Genome Biol.">
        <title>Genomic and genetic analyses of diversity and plant interactions of Pseudomonas fluorescens.</title>
        <authorList>
            <person name="Silby M.W."/>
            <person name="Cerdeno-Tarraga A.M."/>
            <person name="Vernikos G.S."/>
            <person name="Giddens S.R."/>
            <person name="Jackson R.W."/>
            <person name="Preston G.M."/>
            <person name="Zhang X.-X."/>
            <person name="Moon C.D."/>
            <person name="Gehrig S.M."/>
            <person name="Godfrey S.A.C."/>
            <person name="Knight C.G."/>
            <person name="Malone J.G."/>
            <person name="Robinson Z."/>
            <person name="Spiers A.J."/>
            <person name="Harris S."/>
            <person name="Challis G.L."/>
            <person name="Yaxley A.M."/>
            <person name="Harris D."/>
            <person name="Seeger K."/>
            <person name="Murphy L."/>
            <person name="Rutter S."/>
            <person name="Squares R."/>
            <person name="Quail M.A."/>
            <person name="Saunders E."/>
            <person name="Mavromatis K."/>
            <person name="Brettin T.S."/>
            <person name="Bentley S.D."/>
            <person name="Hothersall J."/>
            <person name="Stephens E."/>
            <person name="Thomas C.M."/>
            <person name="Parkhill J."/>
            <person name="Levy S.B."/>
            <person name="Rainey P.B."/>
            <person name="Thomson N.R."/>
        </authorList>
    </citation>
    <scope>NUCLEOTIDE SEQUENCE [LARGE SCALE GENOMIC DNA]</scope>
    <source>
        <strain evidence="5 6">Pf0-1</strain>
    </source>
</reference>
<reference key="2">
    <citation type="journal article" date="2016" name="Arch. Biochem. Biophys.">
        <title>The reduced flavin-dependent monooxygenase SfnG converts dimethylsulfone to methanesulfinate.</title>
        <authorList>
            <person name="Wicht D.K."/>
        </authorList>
    </citation>
    <scope>FUNCTION</scope>
    <scope>CATALYTIC ACTIVITY</scope>
    <scope>BIOPHYSICOCHEMICAL PROPERTIES</scope>
</reference>
<evidence type="ECO:0000269" key="1">
    <source>
    </source>
</evidence>
<evidence type="ECO:0000303" key="2">
    <source>
    </source>
</evidence>
<evidence type="ECO:0000305" key="3"/>
<evidence type="ECO:0000305" key="4">
    <source>
    </source>
</evidence>
<evidence type="ECO:0000312" key="5">
    <source>
        <dbReference type="EMBL" id="ABA75652.1"/>
    </source>
</evidence>
<evidence type="ECO:0000312" key="6">
    <source>
        <dbReference type="Proteomes" id="UP000002704"/>
    </source>
</evidence>
<sequence length="187" mass="20264">MSRPLKVVALSGGTWRPSRTLVLTQALLAELSGHLPIESHLIELGDIARPLGAALSRQELPAEIEAELQAIEQADLLIVAAPVYRGSYPGLLKHLFDLIDLNALIDTPVLLAATGGSERHALVLDHQLRPLFSFFQAVTLPIGVYATEADFADYQITSEPLKARIRLAAERAAPLFGTHLKPLLKIA</sequence>
<dbReference type="EC" id="1.5.1.42" evidence="1"/>
<dbReference type="EMBL" id="CP000094">
    <property type="protein sequence ID" value="ABA75652.1"/>
    <property type="molecule type" value="Genomic_DNA"/>
</dbReference>
<dbReference type="RefSeq" id="WP_011335230.1">
    <property type="nucleotide sequence ID" value="NC_007492.2"/>
</dbReference>
<dbReference type="SMR" id="Q3K9A2"/>
<dbReference type="KEGG" id="pfo:Pfl01_3915"/>
<dbReference type="eggNOG" id="COG0431">
    <property type="taxonomic scope" value="Bacteria"/>
</dbReference>
<dbReference type="HOGENOM" id="CLU_055322_3_3_6"/>
<dbReference type="Proteomes" id="UP000002704">
    <property type="component" value="Chromosome"/>
</dbReference>
<dbReference type="GO" id="GO:0052874">
    <property type="term" value="F:FMN reductase (NADH) activity"/>
    <property type="evidence" value="ECO:0007669"/>
    <property type="project" value="UniProtKB-EC"/>
</dbReference>
<dbReference type="GO" id="GO:0016655">
    <property type="term" value="F:oxidoreductase activity, acting on NAD(P)H, quinone or similar compound as acceptor"/>
    <property type="evidence" value="ECO:0007669"/>
    <property type="project" value="UniProtKB-ARBA"/>
</dbReference>
<dbReference type="Gene3D" id="3.40.50.360">
    <property type="match status" value="1"/>
</dbReference>
<dbReference type="InterPro" id="IPR029039">
    <property type="entry name" value="Flavoprotein-like_sf"/>
</dbReference>
<dbReference type="InterPro" id="IPR005025">
    <property type="entry name" value="FMN_Rdtase-like_dom"/>
</dbReference>
<dbReference type="InterPro" id="IPR019912">
    <property type="entry name" value="FMN_Rdtase_MsuE-like"/>
</dbReference>
<dbReference type="InterPro" id="IPR051814">
    <property type="entry name" value="NAD(P)H-dep_FMN_reductase"/>
</dbReference>
<dbReference type="NCBIfam" id="TIGR03566">
    <property type="entry name" value="FMN_reduc_MsuE"/>
    <property type="match status" value="1"/>
</dbReference>
<dbReference type="PANTHER" id="PTHR43408">
    <property type="entry name" value="FMN REDUCTASE (NADPH)"/>
    <property type="match status" value="1"/>
</dbReference>
<dbReference type="PANTHER" id="PTHR43408:SF2">
    <property type="entry name" value="FMN REDUCTASE (NADPH)"/>
    <property type="match status" value="1"/>
</dbReference>
<dbReference type="Pfam" id="PF03358">
    <property type="entry name" value="FMN_red"/>
    <property type="match status" value="1"/>
</dbReference>
<dbReference type="SUPFAM" id="SSF52218">
    <property type="entry name" value="Flavoproteins"/>
    <property type="match status" value="1"/>
</dbReference>
<proteinExistence type="evidence at protein level"/>
<feature type="chain" id="PRO_0000443540" description="NADH-dependent FMN reductase SfnF">
    <location>
        <begin position="1"/>
        <end position="187"/>
    </location>
</feature>
<comment type="function">
    <text evidence="1">Involved in the dimethyl sulfide degradation pathway. Catalyzes the NADH-dependent reduction of FMN.</text>
</comment>
<comment type="catalytic activity">
    <reaction evidence="1">
        <text>FMNH2 + NAD(+) = FMN + NADH + 2 H(+)</text>
        <dbReference type="Rhea" id="RHEA:21620"/>
        <dbReference type="ChEBI" id="CHEBI:15378"/>
        <dbReference type="ChEBI" id="CHEBI:57540"/>
        <dbReference type="ChEBI" id="CHEBI:57618"/>
        <dbReference type="ChEBI" id="CHEBI:57945"/>
        <dbReference type="ChEBI" id="CHEBI:58210"/>
        <dbReference type="EC" id="1.5.1.42"/>
    </reaction>
</comment>
<comment type="biophysicochemical properties">
    <kinetics>
        <KM evidence="1">8 uM for FMNH(2)</KM>
        <KM evidence="1">69 uM for NADH</KM>
        <Vmax evidence="1">37.0 umol/min/mg enzyme toward FMNH(2)</Vmax>
        <Vmax evidence="1">27.0 umol/min/mg enzyme toward NADH</Vmax>
        <text evidence="1">kcat is 14 sec(-1) for FMNH(2) as substrate. kcat is 10 sec(-1) for NADH as substrate.</text>
    </kinetics>
</comment>
<comment type="similarity">
    <text evidence="3">Belongs to the SsuE family.</text>
</comment>
<name>SFNF_PSEPF</name>